<gene>
    <name evidence="2" type="primary">tuf1</name>
    <name type="ordered locus">Rsph17029_0331</name>
</gene>
<gene>
    <name evidence="2" type="primary">tuf2</name>
    <name type="ordered locus">Rsph17029_0345</name>
</gene>
<gene>
    <name evidence="2" type="primary">tuf3</name>
    <name type="ordered locus">Rsph17029_0359</name>
</gene>
<accession>A3PGI1</accession>
<evidence type="ECO:0000250" key="1"/>
<evidence type="ECO:0000255" key="2">
    <source>
        <dbReference type="HAMAP-Rule" id="MF_00118"/>
    </source>
</evidence>
<keyword id="KW-0963">Cytoplasm</keyword>
<keyword id="KW-0251">Elongation factor</keyword>
<keyword id="KW-0342">GTP-binding</keyword>
<keyword id="KW-0378">Hydrolase</keyword>
<keyword id="KW-0460">Magnesium</keyword>
<keyword id="KW-0479">Metal-binding</keyword>
<keyword id="KW-0547">Nucleotide-binding</keyword>
<keyword id="KW-0648">Protein biosynthesis</keyword>
<feature type="chain" id="PRO_0000337491" description="Elongation factor Tu">
    <location>
        <begin position="1"/>
        <end position="391"/>
    </location>
</feature>
<feature type="domain" description="tr-type G">
    <location>
        <begin position="10"/>
        <end position="201"/>
    </location>
</feature>
<feature type="region of interest" description="G1" evidence="1">
    <location>
        <begin position="19"/>
        <end position="26"/>
    </location>
</feature>
<feature type="region of interest" description="G2" evidence="1">
    <location>
        <begin position="55"/>
        <end position="59"/>
    </location>
</feature>
<feature type="region of interest" description="G3" evidence="1">
    <location>
        <begin position="76"/>
        <end position="79"/>
    </location>
</feature>
<feature type="region of interest" description="G4" evidence="1">
    <location>
        <begin position="131"/>
        <end position="134"/>
    </location>
</feature>
<feature type="region of interest" description="G5" evidence="1">
    <location>
        <begin position="169"/>
        <end position="171"/>
    </location>
</feature>
<feature type="binding site" evidence="2">
    <location>
        <begin position="19"/>
        <end position="26"/>
    </location>
    <ligand>
        <name>GTP</name>
        <dbReference type="ChEBI" id="CHEBI:37565"/>
    </ligand>
</feature>
<feature type="binding site" evidence="2">
    <location>
        <position position="26"/>
    </location>
    <ligand>
        <name>Mg(2+)</name>
        <dbReference type="ChEBI" id="CHEBI:18420"/>
    </ligand>
</feature>
<feature type="binding site" evidence="2">
    <location>
        <begin position="76"/>
        <end position="80"/>
    </location>
    <ligand>
        <name>GTP</name>
        <dbReference type="ChEBI" id="CHEBI:37565"/>
    </ligand>
</feature>
<feature type="binding site" evidence="2">
    <location>
        <begin position="131"/>
        <end position="134"/>
    </location>
    <ligand>
        <name>GTP</name>
        <dbReference type="ChEBI" id="CHEBI:37565"/>
    </ligand>
</feature>
<name>EFTU_CERS1</name>
<protein>
    <recommendedName>
        <fullName evidence="2">Elongation factor Tu</fullName>
        <shortName evidence="2">EF-Tu</shortName>
        <ecNumber evidence="2">3.6.5.3</ecNumber>
    </recommendedName>
</protein>
<organism>
    <name type="scientific">Cereibacter sphaeroides (strain ATCC 17029 / ATH 2.4.9)</name>
    <name type="common">Rhodobacter sphaeroides</name>
    <dbReference type="NCBI Taxonomy" id="349101"/>
    <lineage>
        <taxon>Bacteria</taxon>
        <taxon>Pseudomonadati</taxon>
        <taxon>Pseudomonadota</taxon>
        <taxon>Alphaproteobacteria</taxon>
        <taxon>Rhodobacterales</taxon>
        <taxon>Paracoccaceae</taxon>
        <taxon>Cereibacter</taxon>
    </lineage>
</organism>
<dbReference type="EC" id="3.6.5.3" evidence="2"/>
<dbReference type="EMBL" id="CP000577">
    <property type="protein sequence ID" value="ABN75447.1"/>
    <property type="molecule type" value="Genomic_DNA"/>
</dbReference>
<dbReference type="EMBL" id="CP000577">
    <property type="protein sequence ID" value="ABN75461.1"/>
    <property type="molecule type" value="Genomic_DNA"/>
</dbReference>
<dbReference type="EMBL" id="CP000577">
    <property type="protein sequence ID" value="ABN75475.1"/>
    <property type="molecule type" value="Genomic_DNA"/>
</dbReference>
<dbReference type="SMR" id="A3PGI1"/>
<dbReference type="KEGG" id="rsh:Rsph17029_0331"/>
<dbReference type="KEGG" id="rsh:Rsph17029_0345"/>
<dbReference type="KEGG" id="rsh:Rsph17029_0359"/>
<dbReference type="HOGENOM" id="CLU_007265_0_1_5"/>
<dbReference type="GO" id="GO:0005737">
    <property type="term" value="C:cytoplasm"/>
    <property type="evidence" value="ECO:0007669"/>
    <property type="project" value="UniProtKB-SubCell"/>
</dbReference>
<dbReference type="GO" id="GO:0005525">
    <property type="term" value="F:GTP binding"/>
    <property type="evidence" value="ECO:0007669"/>
    <property type="project" value="UniProtKB-UniRule"/>
</dbReference>
<dbReference type="GO" id="GO:0003924">
    <property type="term" value="F:GTPase activity"/>
    <property type="evidence" value="ECO:0007669"/>
    <property type="project" value="InterPro"/>
</dbReference>
<dbReference type="GO" id="GO:0097216">
    <property type="term" value="F:guanosine tetraphosphate binding"/>
    <property type="evidence" value="ECO:0007669"/>
    <property type="project" value="UniProtKB-ARBA"/>
</dbReference>
<dbReference type="GO" id="GO:0003746">
    <property type="term" value="F:translation elongation factor activity"/>
    <property type="evidence" value="ECO:0007669"/>
    <property type="project" value="UniProtKB-UniRule"/>
</dbReference>
<dbReference type="CDD" id="cd01884">
    <property type="entry name" value="EF_Tu"/>
    <property type="match status" value="1"/>
</dbReference>
<dbReference type="CDD" id="cd03697">
    <property type="entry name" value="EFTU_II"/>
    <property type="match status" value="1"/>
</dbReference>
<dbReference type="CDD" id="cd03707">
    <property type="entry name" value="EFTU_III"/>
    <property type="match status" value="1"/>
</dbReference>
<dbReference type="FunFam" id="2.40.30.10:FF:000001">
    <property type="entry name" value="Elongation factor Tu"/>
    <property type="match status" value="1"/>
</dbReference>
<dbReference type="FunFam" id="3.40.50.300:FF:000003">
    <property type="entry name" value="Elongation factor Tu"/>
    <property type="match status" value="1"/>
</dbReference>
<dbReference type="Gene3D" id="3.40.50.300">
    <property type="entry name" value="P-loop containing nucleotide triphosphate hydrolases"/>
    <property type="match status" value="1"/>
</dbReference>
<dbReference type="Gene3D" id="2.40.30.10">
    <property type="entry name" value="Translation factors"/>
    <property type="match status" value="2"/>
</dbReference>
<dbReference type="HAMAP" id="MF_00118_B">
    <property type="entry name" value="EF_Tu_B"/>
    <property type="match status" value="1"/>
</dbReference>
<dbReference type="InterPro" id="IPR041709">
    <property type="entry name" value="EF-Tu_GTP-bd"/>
</dbReference>
<dbReference type="InterPro" id="IPR050055">
    <property type="entry name" value="EF-Tu_GTPase"/>
</dbReference>
<dbReference type="InterPro" id="IPR004161">
    <property type="entry name" value="EFTu-like_2"/>
</dbReference>
<dbReference type="InterPro" id="IPR033720">
    <property type="entry name" value="EFTU_2"/>
</dbReference>
<dbReference type="InterPro" id="IPR031157">
    <property type="entry name" value="G_TR_CS"/>
</dbReference>
<dbReference type="InterPro" id="IPR027417">
    <property type="entry name" value="P-loop_NTPase"/>
</dbReference>
<dbReference type="InterPro" id="IPR005225">
    <property type="entry name" value="Small_GTP-bd"/>
</dbReference>
<dbReference type="InterPro" id="IPR000795">
    <property type="entry name" value="T_Tr_GTP-bd_dom"/>
</dbReference>
<dbReference type="InterPro" id="IPR009000">
    <property type="entry name" value="Transl_B-barrel_sf"/>
</dbReference>
<dbReference type="InterPro" id="IPR009001">
    <property type="entry name" value="Transl_elong_EF1A/Init_IF2_C"/>
</dbReference>
<dbReference type="InterPro" id="IPR004541">
    <property type="entry name" value="Transl_elong_EFTu/EF1A_bac/org"/>
</dbReference>
<dbReference type="InterPro" id="IPR004160">
    <property type="entry name" value="Transl_elong_EFTu/EF1A_C"/>
</dbReference>
<dbReference type="NCBIfam" id="TIGR00485">
    <property type="entry name" value="EF-Tu"/>
    <property type="match status" value="1"/>
</dbReference>
<dbReference type="NCBIfam" id="NF000766">
    <property type="entry name" value="PRK00049.1"/>
    <property type="match status" value="1"/>
</dbReference>
<dbReference type="NCBIfam" id="NF009372">
    <property type="entry name" value="PRK12735.1"/>
    <property type="match status" value="1"/>
</dbReference>
<dbReference type="NCBIfam" id="NF009373">
    <property type="entry name" value="PRK12736.1"/>
    <property type="match status" value="1"/>
</dbReference>
<dbReference type="NCBIfam" id="TIGR00231">
    <property type="entry name" value="small_GTP"/>
    <property type="match status" value="1"/>
</dbReference>
<dbReference type="PANTHER" id="PTHR43721:SF22">
    <property type="entry name" value="ELONGATION FACTOR TU, MITOCHONDRIAL"/>
    <property type="match status" value="1"/>
</dbReference>
<dbReference type="PANTHER" id="PTHR43721">
    <property type="entry name" value="ELONGATION FACTOR TU-RELATED"/>
    <property type="match status" value="1"/>
</dbReference>
<dbReference type="Pfam" id="PF00009">
    <property type="entry name" value="GTP_EFTU"/>
    <property type="match status" value="1"/>
</dbReference>
<dbReference type="Pfam" id="PF03144">
    <property type="entry name" value="GTP_EFTU_D2"/>
    <property type="match status" value="1"/>
</dbReference>
<dbReference type="Pfam" id="PF03143">
    <property type="entry name" value="GTP_EFTU_D3"/>
    <property type="match status" value="1"/>
</dbReference>
<dbReference type="PRINTS" id="PR00315">
    <property type="entry name" value="ELONGATNFCT"/>
</dbReference>
<dbReference type="SUPFAM" id="SSF50465">
    <property type="entry name" value="EF-Tu/eEF-1alpha/eIF2-gamma C-terminal domain"/>
    <property type="match status" value="1"/>
</dbReference>
<dbReference type="SUPFAM" id="SSF52540">
    <property type="entry name" value="P-loop containing nucleoside triphosphate hydrolases"/>
    <property type="match status" value="1"/>
</dbReference>
<dbReference type="SUPFAM" id="SSF50447">
    <property type="entry name" value="Translation proteins"/>
    <property type="match status" value="1"/>
</dbReference>
<dbReference type="PROSITE" id="PS00301">
    <property type="entry name" value="G_TR_1"/>
    <property type="match status" value="1"/>
</dbReference>
<dbReference type="PROSITE" id="PS51722">
    <property type="entry name" value="G_TR_2"/>
    <property type="match status" value="1"/>
</dbReference>
<sequence>MAKAKFERNKPHVNIGTIGHVDHGKTTLTAAITKYFGEFRAYDQIDGAPEERARGITISTAHVEYESDTRHYAHVDCPGHADYVKNMITGAAQMDGAILVVNAADGPMPQTREHILLGRQVGIPYMVVYMNKVDQVDDPELIELVEMEIRELLSSYDYPGDDIPIIKGSALAAMNGTDKEIGEDSIRALIAAVDEYIPTPARAVDQPFLMPVEDVFSISGRGTVATGRIERGVVKVGEELEIVGIRPSKKTVCTGVEMFRKLLDQGEAGDNVGLLLRGVDRDGIERGQVLCKPGSVKPHTKFEAEAYILTKEEGGRHTPFFANYRPQFYFRTTDVTGTVQLPEGTEMVMPGDNLKFNVELIAPIAMEEKLRFAIREGGRTVGAGVVSKIIA</sequence>
<comment type="function">
    <text evidence="2">GTP hydrolase that promotes the GTP-dependent binding of aminoacyl-tRNA to the A-site of ribosomes during protein biosynthesis.</text>
</comment>
<comment type="catalytic activity">
    <reaction evidence="2">
        <text>GTP + H2O = GDP + phosphate + H(+)</text>
        <dbReference type="Rhea" id="RHEA:19669"/>
        <dbReference type="ChEBI" id="CHEBI:15377"/>
        <dbReference type="ChEBI" id="CHEBI:15378"/>
        <dbReference type="ChEBI" id="CHEBI:37565"/>
        <dbReference type="ChEBI" id="CHEBI:43474"/>
        <dbReference type="ChEBI" id="CHEBI:58189"/>
        <dbReference type="EC" id="3.6.5.3"/>
    </reaction>
    <physiologicalReaction direction="left-to-right" evidence="2">
        <dbReference type="Rhea" id="RHEA:19670"/>
    </physiologicalReaction>
</comment>
<comment type="subunit">
    <text evidence="2">Monomer.</text>
</comment>
<comment type="subcellular location">
    <subcellularLocation>
        <location evidence="2">Cytoplasm</location>
    </subcellularLocation>
</comment>
<comment type="similarity">
    <text evidence="2">Belongs to the TRAFAC class translation factor GTPase superfamily. Classic translation factor GTPase family. EF-Tu/EF-1A subfamily.</text>
</comment>
<proteinExistence type="inferred from homology"/>
<reference key="1">
    <citation type="submission" date="2007-02" db="EMBL/GenBank/DDBJ databases">
        <title>Complete sequence of chromosome 1 of Rhodobacter sphaeroides ATCC 17029.</title>
        <authorList>
            <person name="Copeland A."/>
            <person name="Lucas S."/>
            <person name="Lapidus A."/>
            <person name="Barry K."/>
            <person name="Detter J.C."/>
            <person name="Glavina del Rio T."/>
            <person name="Hammon N."/>
            <person name="Israni S."/>
            <person name="Dalin E."/>
            <person name="Tice H."/>
            <person name="Pitluck S."/>
            <person name="Kiss H."/>
            <person name="Brettin T."/>
            <person name="Bruce D."/>
            <person name="Han C."/>
            <person name="Tapia R."/>
            <person name="Gilna P."/>
            <person name="Schmutz J."/>
            <person name="Larimer F."/>
            <person name="Land M."/>
            <person name="Hauser L."/>
            <person name="Kyrpides N."/>
            <person name="Mikhailova N."/>
            <person name="Richardson P."/>
            <person name="Mackenzie C."/>
            <person name="Choudhary M."/>
            <person name="Donohue T.J."/>
            <person name="Kaplan S."/>
        </authorList>
    </citation>
    <scope>NUCLEOTIDE SEQUENCE [LARGE SCALE GENOMIC DNA]</scope>
    <source>
        <strain>ATCC 17029 / ATH 2.4.9</strain>
    </source>
</reference>